<dbReference type="EMBL" id="U17109">
    <property type="protein sequence ID" value="AAA58713.1"/>
    <property type="molecule type" value="Genomic_DNA"/>
</dbReference>
<dbReference type="SMR" id="P55148"/>
<dbReference type="GO" id="GO:0031411">
    <property type="term" value="C:gas vesicle"/>
    <property type="evidence" value="ECO:0007669"/>
    <property type="project" value="UniProtKB-SubCell"/>
</dbReference>
<dbReference type="GO" id="GO:0012506">
    <property type="term" value="C:vesicle membrane"/>
    <property type="evidence" value="ECO:0007669"/>
    <property type="project" value="InterPro"/>
</dbReference>
<dbReference type="GO" id="GO:0005198">
    <property type="term" value="F:structural molecule activity"/>
    <property type="evidence" value="ECO:0007669"/>
    <property type="project" value="InterPro"/>
</dbReference>
<dbReference type="GO" id="GO:0031412">
    <property type="term" value="P:gas vesicle organization"/>
    <property type="evidence" value="ECO:0007669"/>
    <property type="project" value="InterPro"/>
</dbReference>
<dbReference type="InterPro" id="IPR000638">
    <property type="entry name" value="Gas-vesicle_GvpA-like"/>
</dbReference>
<dbReference type="InterPro" id="IPR007805">
    <property type="entry name" value="GvpK"/>
</dbReference>
<dbReference type="PANTHER" id="PTHR40137">
    <property type="entry name" value="PROTEIN GVPK 1"/>
    <property type="match status" value="1"/>
</dbReference>
<dbReference type="PANTHER" id="PTHR40137:SF2">
    <property type="entry name" value="PROTEIN GVPK 1"/>
    <property type="match status" value="1"/>
</dbReference>
<dbReference type="Pfam" id="PF00741">
    <property type="entry name" value="Gas_vesicle"/>
    <property type="match status" value="1"/>
</dbReference>
<dbReference type="Pfam" id="PF05121">
    <property type="entry name" value="GvpK"/>
    <property type="match status" value="1"/>
</dbReference>
<comment type="function">
    <text evidence="1 4">Might be involved in nucleating gas vesicle formation (By similarity). Gas vesicles (GV) are hollow, gas filled proteinaceous nanostructures. During planktonic growth they allow positioning of the organism at a favorable depth for light or nutrient acquisition (Probable).</text>
</comment>
<comment type="subcellular location">
    <subcellularLocation>
        <location evidence="3">Gas vesicle</location>
    </subcellularLocation>
</comment>
<comment type="similarity">
    <text evidence="3">Belongs to the gas vesicle GvpK family.</text>
</comment>
<keyword id="KW-0304">Gas vesicle</keyword>
<gene>
    <name evidence="2" type="primary">gvpK</name>
</gene>
<name>GVPK_DOLFA</name>
<accession>P55148</accession>
<proteinExistence type="inferred from homology"/>
<protein>
    <recommendedName>
        <fullName>Gas vesicle protein K</fullName>
        <shortName>GvpK</shortName>
    </recommendedName>
</protein>
<sequence length="155" mass="17040">MVCTPAENFNNSLTIASKPKNEAGLAPLLLTVLELVRQLMEAQVIRRMEEDLLSEPDLERAADSLQKLEEQILHLCEMFEVDPADLNINLGEIGTLLPSSGSYYPGQPSSRPSVLELLDRLLNTGIVVDGEIDLGIAQIDLIHAKLRLVLTSKPI</sequence>
<reference key="1">
    <citation type="journal article" date="1997" name="DNA Seq.">
        <title>Genes encoding proteins homologous to halobacterial Gvps N, J, K, F and L are located downstream of gvpC in the cyanobacterium Anabaena flos-aquae.</title>
        <authorList>
            <person name="Kinsman R."/>
            <person name="Hayes P.K."/>
        </authorList>
    </citation>
    <scope>NUCLEOTIDE SEQUENCE [GENOMIC DNA]</scope>
    <source>
        <strain>CCAP 1403/13f</strain>
    </source>
</reference>
<evidence type="ECO:0000250" key="1">
    <source>
        <dbReference type="UniProtKB" id="P24375"/>
    </source>
</evidence>
<evidence type="ECO:0000303" key="2">
    <source>
    </source>
</evidence>
<evidence type="ECO:0000305" key="3"/>
<evidence type="ECO:0000305" key="4">
    <source>
    </source>
</evidence>
<feature type="chain" id="PRO_0000182692" description="Gas vesicle protein K">
    <location>
        <begin position="1"/>
        <end position="155"/>
    </location>
</feature>
<organism>
    <name type="scientific">Dolichospermum flosaquae</name>
    <name type="common">Anabaena flos-aquae</name>
    <dbReference type="NCBI Taxonomy" id="1166"/>
    <lineage>
        <taxon>Bacteria</taxon>
        <taxon>Bacillati</taxon>
        <taxon>Cyanobacteriota</taxon>
        <taxon>Cyanophyceae</taxon>
        <taxon>Nostocales</taxon>
        <taxon>Aphanizomenonaceae</taxon>
        <taxon>Dolichospermum</taxon>
    </lineage>
</organism>